<organism>
    <name type="scientific">Staphylococcus aureus (strain JH9)</name>
    <dbReference type="NCBI Taxonomy" id="359786"/>
    <lineage>
        <taxon>Bacteria</taxon>
        <taxon>Bacillati</taxon>
        <taxon>Bacillota</taxon>
        <taxon>Bacilli</taxon>
        <taxon>Bacillales</taxon>
        <taxon>Staphylococcaceae</taxon>
        <taxon>Staphylococcus</taxon>
    </lineage>
</organism>
<comment type="function">
    <text evidence="1">Involved in multidrug efflux.</text>
</comment>
<comment type="subcellular location">
    <subcellularLocation>
        <location evidence="3">Cell membrane</location>
        <topology evidence="3">Multi-pass membrane protein</topology>
    </subcellularLocation>
</comment>
<comment type="similarity">
    <text evidence="3">Belongs to the multidrug resistance efflux pump SepA family.</text>
</comment>
<comment type="sequence caution" evidence="3">
    <conflict type="erroneous initiation">
        <sequence resource="EMBL-CDS" id="ABQ49980"/>
    </conflict>
</comment>
<evidence type="ECO:0000250" key="1"/>
<evidence type="ECO:0000255" key="2"/>
<evidence type="ECO:0000305" key="3"/>
<dbReference type="EMBL" id="CP000703">
    <property type="protein sequence ID" value="ABQ49980.1"/>
    <property type="status" value="ALT_INIT"/>
    <property type="molecule type" value="Genomic_DNA"/>
</dbReference>
<dbReference type="RefSeq" id="WP_000636857.1">
    <property type="nucleotide sequence ID" value="NC_009487.1"/>
</dbReference>
<dbReference type="KEGG" id="saj:SaurJH9_2199"/>
<dbReference type="HOGENOM" id="CLU_151983_0_0_9"/>
<dbReference type="GO" id="GO:0005886">
    <property type="term" value="C:plasma membrane"/>
    <property type="evidence" value="ECO:0007669"/>
    <property type="project" value="UniProtKB-SubCell"/>
</dbReference>
<dbReference type="InterPro" id="IPR031396">
    <property type="entry name" value="SepA"/>
</dbReference>
<dbReference type="Pfam" id="PF17080">
    <property type="entry name" value="SepA"/>
    <property type="match status" value="1"/>
</dbReference>
<sequence length="157" mass="18899">MIVNYLKHKFYNLLTTMIVLFIFVLSGAIFLTFLGFGLYGLSRILIYFRLGDFTYNRSMYDNLLYYGSYIIFGYFIIFAVEHLMDYFRKMLPENAYFRGATFHLISYTVATTLFYFIIHLNYVYINIDFWVIMVIIGFLYVCKLQFYPESKNLNNRK</sequence>
<proteinExistence type="inferred from homology"/>
<keyword id="KW-1003">Cell membrane</keyword>
<keyword id="KW-0472">Membrane</keyword>
<keyword id="KW-0812">Transmembrane</keyword>
<keyword id="KW-1133">Transmembrane helix</keyword>
<keyword id="KW-0813">Transport</keyword>
<name>MDEP_STAA9</name>
<protein>
    <recommendedName>
        <fullName>Multidrug resistance efflux pump SepA</fullName>
    </recommendedName>
    <alternativeName>
        <fullName>Antiseptic resistance protein SepA</fullName>
    </alternativeName>
    <alternativeName>
        <fullName>Staphylococcal efflux pump A</fullName>
    </alternativeName>
</protein>
<gene>
    <name type="primary">sepA</name>
    <name type="ordered locus">SaurJH9_2199</name>
</gene>
<feature type="chain" id="PRO_5000247360" description="Multidrug resistance efflux pump SepA">
    <location>
        <begin position="1"/>
        <end position="155"/>
    </location>
</feature>
<feature type="transmembrane region" description="Helical" evidence="2">
    <location>
        <begin position="18"/>
        <end position="38"/>
    </location>
</feature>
<feature type="transmembrane region" description="Helical" evidence="2">
    <location>
        <begin position="63"/>
        <end position="83"/>
    </location>
</feature>
<feature type="transmembrane region" description="Helical" evidence="2">
    <location>
        <begin position="100"/>
        <end position="120"/>
    </location>
</feature>
<feature type="transmembrane region" description="Helical" evidence="2">
    <location>
        <begin position="122"/>
        <end position="142"/>
    </location>
</feature>
<reference key="1">
    <citation type="submission" date="2007-05" db="EMBL/GenBank/DDBJ databases">
        <title>Complete sequence of chromosome of Staphylococcus aureus subsp. aureus JH9.</title>
        <authorList>
            <consortium name="US DOE Joint Genome Institute"/>
            <person name="Copeland A."/>
            <person name="Lucas S."/>
            <person name="Lapidus A."/>
            <person name="Barry K."/>
            <person name="Detter J.C."/>
            <person name="Glavina del Rio T."/>
            <person name="Hammon N."/>
            <person name="Israni S."/>
            <person name="Pitluck S."/>
            <person name="Chain P."/>
            <person name="Malfatti S."/>
            <person name="Shin M."/>
            <person name="Vergez L."/>
            <person name="Schmutz J."/>
            <person name="Larimer F."/>
            <person name="Land M."/>
            <person name="Hauser L."/>
            <person name="Kyrpides N."/>
            <person name="Kim E."/>
            <person name="Tomasz A."/>
            <person name="Richardson P."/>
        </authorList>
    </citation>
    <scope>NUCLEOTIDE SEQUENCE [LARGE SCALE GENOMIC DNA]</scope>
    <source>
        <strain>JH9</strain>
    </source>
</reference>
<accession>A5IUV7</accession>